<proteinExistence type="evidence at protein level"/>
<accession>P41861</accession>
<sequence>ASGQDFMRF</sequence>
<keyword id="KW-0027">Amidation</keyword>
<keyword id="KW-0903">Direct protein sequencing</keyword>
<keyword id="KW-0527">Neuropeptide</keyword>
<keyword id="KW-0964">Secreted</keyword>
<comment type="subcellular location">
    <subcellularLocation>
        <location>Secreted</location>
    </subcellularLocation>
</comment>
<comment type="similarity">
    <text evidence="2">Belongs to the FARP (FMRFamide related peptide) family.</text>
</comment>
<organism>
    <name type="scientific">Calliphora vomitoria</name>
    <name type="common">Blue bottle fly</name>
    <name type="synonym">Musca vomitoria</name>
    <dbReference type="NCBI Taxonomy" id="27454"/>
    <lineage>
        <taxon>Eukaryota</taxon>
        <taxon>Metazoa</taxon>
        <taxon>Ecdysozoa</taxon>
        <taxon>Arthropoda</taxon>
        <taxon>Hexapoda</taxon>
        <taxon>Insecta</taxon>
        <taxon>Pterygota</taxon>
        <taxon>Neoptera</taxon>
        <taxon>Endopterygota</taxon>
        <taxon>Diptera</taxon>
        <taxon>Brachycera</taxon>
        <taxon>Muscomorpha</taxon>
        <taxon>Oestroidea</taxon>
        <taxon>Calliphoridae</taxon>
        <taxon>Calliphorinae</taxon>
        <taxon>Calliphora</taxon>
    </lineage>
</organism>
<evidence type="ECO:0000269" key="1">
    <source>
    </source>
</evidence>
<evidence type="ECO:0000305" key="2"/>
<reference key="1">
    <citation type="journal article" date="1992" name="Proc. Natl. Acad. Sci. U.S.A.">
        <title>Isolation, structure, and activity of -Phe-Met-Arg-Phe-NH2 neuropeptides (designated calliFMRFamides) from the blowfly Calliphora vomitoria.</title>
        <authorList>
            <person name="Duve H."/>
            <person name="Johnsen A.H."/>
            <person name="Sewell J.C."/>
            <person name="Scott A.G."/>
            <person name="Orchard I."/>
            <person name="Rehfeld J.F."/>
            <person name="Thorpe A."/>
        </authorList>
    </citation>
    <scope>PROTEIN SEQUENCE</scope>
    <scope>AMIDATION AT PHE-9</scope>
    <source>
        <tissue>Thoracic ganglion</tissue>
    </source>
</reference>
<dbReference type="PIR" id="F41978">
    <property type="entry name" value="F41978"/>
</dbReference>
<dbReference type="GO" id="GO:0005576">
    <property type="term" value="C:extracellular region"/>
    <property type="evidence" value="ECO:0007669"/>
    <property type="project" value="UniProtKB-SubCell"/>
</dbReference>
<dbReference type="GO" id="GO:0007218">
    <property type="term" value="P:neuropeptide signaling pathway"/>
    <property type="evidence" value="ECO:0007669"/>
    <property type="project" value="UniProtKB-KW"/>
</dbReference>
<name>FAR6_CALVO</name>
<feature type="peptide" id="PRO_0000043668" description="CalliFMRFamide-6">
    <location>
        <begin position="1"/>
        <end position="9"/>
    </location>
</feature>
<feature type="modified residue" description="Phenylalanine amide" evidence="1">
    <location>
        <position position="9"/>
    </location>
</feature>
<protein>
    <recommendedName>
        <fullName>CalliFMRFamide-6</fullName>
    </recommendedName>
</protein>